<dbReference type="EMBL" id="CH476636">
    <property type="protein sequence ID" value="EDN94940.1"/>
    <property type="molecule type" value="Genomic_DNA"/>
</dbReference>
<dbReference type="RefSeq" id="XP_001588368.1">
    <property type="nucleotide sequence ID" value="XM_001588318.1"/>
</dbReference>
<dbReference type="FunCoup" id="A7EZP8">
    <property type="interactions" value="1169"/>
</dbReference>
<dbReference type="STRING" id="665079.A7EZP8"/>
<dbReference type="GeneID" id="5484538"/>
<dbReference type="KEGG" id="ssl:SS1G_10815"/>
<dbReference type="InParanoid" id="A7EZP8"/>
<dbReference type="OMA" id="QDRGDTF"/>
<dbReference type="Proteomes" id="UP000001312">
    <property type="component" value="Unassembled WGS sequence"/>
</dbReference>
<dbReference type="GO" id="GO:0005730">
    <property type="term" value="C:nucleolus"/>
    <property type="evidence" value="ECO:0000318"/>
    <property type="project" value="GO_Central"/>
</dbReference>
<dbReference type="GO" id="GO:0032040">
    <property type="term" value="C:small-subunit processome"/>
    <property type="evidence" value="ECO:0000318"/>
    <property type="project" value="GO_Central"/>
</dbReference>
<dbReference type="GO" id="GO:0019843">
    <property type="term" value="F:rRNA binding"/>
    <property type="evidence" value="ECO:0000318"/>
    <property type="project" value="GO_Central"/>
</dbReference>
<dbReference type="GO" id="GO:0034511">
    <property type="term" value="F:U3 snoRNA binding"/>
    <property type="evidence" value="ECO:0000318"/>
    <property type="project" value="GO_Central"/>
</dbReference>
<dbReference type="GO" id="GO:0000462">
    <property type="term" value="P:maturation of SSU-rRNA from tricistronic rRNA transcript (SSU-rRNA, 5.8S rRNA, LSU-rRNA)"/>
    <property type="evidence" value="ECO:0000318"/>
    <property type="project" value="GO_Central"/>
</dbReference>
<dbReference type="FunFam" id="3.40.50.300:FF:002356">
    <property type="entry name" value="U3 small nucleolar RNA-associated protein 25"/>
    <property type="match status" value="1"/>
</dbReference>
<dbReference type="Gene3D" id="3.40.50.300">
    <property type="entry name" value="P-loop containing nucleotide triphosphate hydrolases"/>
    <property type="match status" value="1"/>
</dbReference>
<dbReference type="InterPro" id="IPR027417">
    <property type="entry name" value="P-loop_NTPase"/>
</dbReference>
<dbReference type="InterPro" id="IPR010678">
    <property type="entry name" value="UTP25"/>
</dbReference>
<dbReference type="InterPro" id="IPR053939">
    <property type="entry name" value="UTP25_C"/>
</dbReference>
<dbReference type="InterPro" id="IPR053940">
    <property type="entry name" value="UTP25_NTPase-like"/>
</dbReference>
<dbReference type="PANTHER" id="PTHR12933">
    <property type="entry name" value="ORF PROTEIN-RELATED"/>
    <property type="match status" value="1"/>
</dbReference>
<dbReference type="PANTHER" id="PTHR12933:SF0">
    <property type="entry name" value="U3 SMALL NUCLEOLAR RNA-ASSOCIATED PROTEIN 25 HOMOLOG"/>
    <property type="match status" value="1"/>
</dbReference>
<dbReference type="Pfam" id="PF06862">
    <property type="entry name" value="Utp25_C"/>
    <property type="match status" value="1"/>
</dbReference>
<dbReference type="Pfam" id="PF22916">
    <property type="entry name" value="UTP25_NTPase-like"/>
    <property type="match status" value="1"/>
</dbReference>
<comment type="function">
    <text evidence="1">DEAD-box RNA helicase-like protein required for pre-18S rRNA processing, specifically at sites A0, A1, and A2.</text>
</comment>
<comment type="subunit">
    <text evidence="1">Component of the ribosomal small subunit (SSU) processome composed of at least 40 protein subunits and snoRNA U3.</text>
</comment>
<comment type="subcellular location">
    <subcellularLocation>
        <location evidence="1">Nucleus</location>
        <location evidence="1">Nucleolus</location>
    </subcellularLocation>
</comment>
<comment type="similarity">
    <text evidence="3">Belongs to the UTP25 family.</text>
</comment>
<feature type="chain" id="PRO_0000408139" description="U3 small nucleolar RNA-associated protein 25">
    <location>
        <begin position="1"/>
        <end position="724"/>
    </location>
</feature>
<feature type="region of interest" description="Disordered" evidence="2">
    <location>
        <begin position="1"/>
        <end position="176"/>
    </location>
</feature>
<feature type="compositionally biased region" description="Gly residues" evidence="2">
    <location>
        <begin position="11"/>
        <end position="38"/>
    </location>
</feature>
<feature type="compositionally biased region" description="Acidic residues" evidence="2">
    <location>
        <begin position="60"/>
        <end position="90"/>
    </location>
</feature>
<feature type="compositionally biased region" description="Acidic residues" evidence="2">
    <location>
        <begin position="126"/>
        <end position="150"/>
    </location>
</feature>
<feature type="compositionally biased region" description="Acidic residues" evidence="2">
    <location>
        <begin position="157"/>
        <end position="168"/>
    </location>
</feature>
<reference key="1">
    <citation type="journal article" date="2011" name="PLoS Genet.">
        <title>Genomic analysis of the necrotrophic fungal pathogens Sclerotinia sclerotiorum and Botrytis cinerea.</title>
        <authorList>
            <person name="Amselem J."/>
            <person name="Cuomo C.A."/>
            <person name="van Kan J.A.L."/>
            <person name="Viaud M."/>
            <person name="Benito E.P."/>
            <person name="Couloux A."/>
            <person name="Coutinho P.M."/>
            <person name="de Vries R.P."/>
            <person name="Dyer P.S."/>
            <person name="Fillinger S."/>
            <person name="Fournier E."/>
            <person name="Gout L."/>
            <person name="Hahn M."/>
            <person name="Kohn L."/>
            <person name="Lapalu N."/>
            <person name="Plummer K.M."/>
            <person name="Pradier J.-M."/>
            <person name="Quevillon E."/>
            <person name="Sharon A."/>
            <person name="Simon A."/>
            <person name="ten Have A."/>
            <person name="Tudzynski B."/>
            <person name="Tudzynski P."/>
            <person name="Wincker P."/>
            <person name="Andrew M."/>
            <person name="Anthouard V."/>
            <person name="Beever R.E."/>
            <person name="Beffa R."/>
            <person name="Benoit I."/>
            <person name="Bouzid O."/>
            <person name="Brault B."/>
            <person name="Chen Z."/>
            <person name="Choquer M."/>
            <person name="Collemare J."/>
            <person name="Cotton P."/>
            <person name="Danchin E.G."/>
            <person name="Da Silva C."/>
            <person name="Gautier A."/>
            <person name="Giraud C."/>
            <person name="Giraud T."/>
            <person name="Gonzalez C."/>
            <person name="Grossetete S."/>
            <person name="Gueldener U."/>
            <person name="Henrissat B."/>
            <person name="Howlett B.J."/>
            <person name="Kodira C."/>
            <person name="Kretschmer M."/>
            <person name="Lappartient A."/>
            <person name="Leroch M."/>
            <person name="Levis C."/>
            <person name="Mauceli E."/>
            <person name="Neuveglise C."/>
            <person name="Oeser B."/>
            <person name="Pearson M."/>
            <person name="Poulain J."/>
            <person name="Poussereau N."/>
            <person name="Quesneville H."/>
            <person name="Rascle C."/>
            <person name="Schumacher J."/>
            <person name="Segurens B."/>
            <person name="Sexton A."/>
            <person name="Silva E."/>
            <person name="Sirven C."/>
            <person name="Soanes D.M."/>
            <person name="Talbot N.J."/>
            <person name="Templeton M."/>
            <person name="Yandava C."/>
            <person name="Yarden O."/>
            <person name="Zeng Q."/>
            <person name="Rollins J.A."/>
            <person name="Lebrun M.-H."/>
            <person name="Dickman M."/>
        </authorList>
    </citation>
    <scope>NUCLEOTIDE SEQUENCE [LARGE SCALE GENOMIC DNA]</scope>
    <source>
        <strain>ATCC 18683 / 1980 / Ss-1</strain>
    </source>
</reference>
<name>UTP25_SCLS1</name>
<gene>
    <name type="primary">utp25</name>
    <name type="ORF">SS1G_10815</name>
</gene>
<sequence>MAFGQRNTSRGGRGGGGSSFRGRGGSRGGPRGRGGLRGGRGRGRGRPVFDSARLAQQKEEGEESNSESEESSQDEAMESEEESSDDDDAEPAPAVKSYAALMQSFTADSAPQAKRRKLNVDKEEKQDEEADLMDQDANDADHVEEAEEGPETATDGLLEEEDEEDNSDPFEAHFANPDDNILSRRLKHLENGQWAIQKSILAKIGRAITSVPGDDEAKQTKSSIINSPEELKLKQKLAGVMKKQCPTFDTLEKSISPLIFGYQDLLFCERNTSNAESLRRLTCLHAVNHVFKTRDRVIKNNSRLAREDNSDDLELRDQGFTRPKVLMLLPTRESCVRMVDMITSLCEPDQQENRKRFNDSYVDKEEKYSTDKPEDFRELFAGNDDDMFRLGLKFTRKTVKYFSQFYNSDIIFASPLGLRMAIGNEDAKKVDHDFLSSIEMVIVDQADALLMQNWEHVEFIFDHLNLQPKEAHGCDFSRVRSWYLDNNAKYFRQTIALAGFNTPELNTMFYNQSKNWAGKVKVSSNYPGAIQELGLKVKQTFSRLDSQSFASDPDSRFEYFTSAIIPTLTRRSKDSAGTLLFIPSYLDFVRVRNYFSTSATTRTLSFGSISEYTTPKEVARARSHFYSGRHTILLYTERAHHFRRYQIRGVKKVIMYGLPDNPIFYKEIVGGYLSRSVREGDLEPGDGSVRVVFSKWDVMKLERIAGTERVGKMIKEKGDTFDFL</sequence>
<proteinExistence type="inferred from homology"/>
<organism>
    <name type="scientific">Sclerotinia sclerotiorum (strain ATCC 18683 / 1980 / Ss-1)</name>
    <name type="common">White mold</name>
    <name type="synonym">Whetzelinia sclerotiorum</name>
    <dbReference type="NCBI Taxonomy" id="665079"/>
    <lineage>
        <taxon>Eukaryota</taxon>
        <taxon>Fungi</taxon>
        <taxon>Dikarya</taxon>
        <taxon>Ascomycota</taxon>
        <taxon>Pezizomycotina</taxon>
        <taxon>Leotiomycetes</taxon>
        <taxon>Helotiales</taxon>
        <taxon>Sclerotiniaceae</taxon>
        <taxon>Sclerotinia</taxon>
    </lineage>
</organism>
<protein>
    <recommendedName>
        <fullName>U3 small nucleolar RNA-associated protein 25</fullName>
        <shortName>U3 snoRNA-associated protein 25</shortName>
    </recommendedName>
    <alternativeName>
        <fullName>U three protein 25</fullName>
    </alternativeName>
</protein>
<keyword id="KW-0539">Nucleus</keyword>
<keyword id="KW-1185">Reference proteome</keyword>
<keyword id="KW-0687">Ribonucleoprotein</keyword>
<keyword id="KW-0690">Ribosome biogenesis</keyword>
<keyword id="KW-0698">rRNA processing</keyword>
<accession>A7EZP8</accession>
<evidence type="ECO:0000250" key="1"/>
<evidence type="ECO:0000256" key="2">
    <source>
        <dbReference type="SAM" id="MobiDB-lite"/>
    </source>
</evidence>
<evidence type="ECO:0000305" key="3"/>